<evidence type="ECO:0000255" key="1">
    <source>
        <dbReference type="HAMAP-Rule" id="MF_00201"/>
    </source>
</evidence>
<protein>
    <recommendedName>
        <fullName evidence="1">DNA repair protein RecO</fullName>
    </recommendedName>
    <alternativeName>
        <fullName evidence="1">Recombination protein O</fullName>
    </alternativeName>
</protein>
<proteinExistence type="inferred from homology"/>
<organism>
    <name type="scientific">Xanthomonas oryzae pv. oryzae (strain MAFF 311018)</name>
    <dbReference type="NCBI Taxonomy" id="342109"/>
    <lineage>
        <taxon>Bacteria</taxon>
        <taxon>Pseudomonadati</taxon>
        <taxon>Pseudomonadota</taxon>
        <taxon>Gammaproteobacteria</taxon>
        <taxon>Lysobacterales</taxon>
        <taxon>Lysobacteraceae</taxon>
        <taxon>Xanthomonas</taxon>
    </lineage>
</organism>
<name>RECO_XANOM</name>
<reference key="1">
    <citation type="journal article" date="2005" name="Jpn. Agric. Res. Q.">
        <title>Genome sequence of Xanthomonas oryzae pv. oryzae suggests contribution of large numbers of effector genes and insertion sequences to its race diversity.</title>
        <authorList>
            <person name="Ochiai H."/>
            <person name="Inoue Y."/>
            <person name="Takeya M."/>
            <person name="Sasaki A."/>
            <person name="Kaku H."/>
        </authorList>
    </citation>
    <scope>NUCLEOTIDE SEQUENCE [LARGE SCALE GENOMIC DNA]</scope>
    <source>
        <strain>MAFF 311018</strain>
    </source>
</reference>
<gene>
    <name evidence="1" type="primary">recO</name>
    <name type="ordered locus">XOO1753</name>
</gene>
<comment type="function">
    <text evidence="1">Involved in DNA repair and RecF pathway recombination.</text>
</comment>
<comment type="similarity">
    <text evidence="1">Belongs to the RecO family.</text>
</comment>
<dbReference type="EMBL" id="AP008229">
    <property type="protein sequence ID" value="BAE68508.1"/>
    <property type="molecule type" value="Genomic_DNA"/>
</dbReference>
<dbReference type="RefSeq" id="WP_011258604.1">
    <property type="nucleotide sequence ID" value="NC_007705.1"/>
</dbReference>
<dbReference type="SMR" id="Q2P4L9"/>
<dbReference type="KEGG" id="xom:XOO1753"/>
<dbReference type="HOGENOM" id="CLU_066645_1_0_6"/>
<dbReference type="GO" id="GO:0043590">
    <property type="term" value="C:bacterial nucleoid"/>
    <property type="evidence" value="ECO:0007669"/>
    <property type="project" value="TreeGrafter"/>
</dbReference>
<dbReference type="GO" id="GO:0006310">
    <property type="term" value="P:DNA recombination"/>
    <property type="evidence" value="ECO:0007669"/>
    <property type="project" value="UniProtKB-UniRule"/>
</dbReference>
<dbReference type="GO" id="GO:0006302">
    <property type="term" value="P:double-strand break repair"/>
    <property type="evidence" value="ECO:0007669"/>
    <property type="project" value="TreeGrafter"/>
</dbReference>
<dbReference type="Gene3D" id="2.40.50.140">
    <property type="entry name" value="Nucleic acid-binding proteins"/>
    <property type="match status" value="1"/>
</dbReference>
<dbReference type="Gene3D" id="1.20.1440.120">
    <property type="entry name" value="Recombination protein O, C-terminal domain"/>
    <property type="match status" value="1"/>
</dbReference>
<dbReference type="HAMAP" id="MF_00201">
    <property type="entry name" value="RecO"/>
    <property type="match status" value="1"/>
</dbReference>
<dbReference type="InterPro" id="IPR037278">
    <property type="entry name" value="ARFGAP/RecO"/>
</dbReference>
<dbReference type="InterPro" id="IPR022572">
    <property type="entry name" value="DNA_rep/recomb_RecO_N"/>
</dbReference>
<dbReference type="InterPro" id="IPR012340">
    <property type="entry name" value="NA-bd_OB-fold"/>
</dbReference>
<dbReference type="InterPro" id="IPR003717">
    <property type="entry name" value="RecO"/>
</dbReference>
<dbReference type="InterPro" id="IPR042242">
    <property type="entry name" value="RecO_C"/>
</dbReference>
<dbReference type="NCBIfam" id="TIGR00613">
    <property type="entry name" value="reco"/>
    <property type="match status" value="1"/>
</dbReference>
<dbReference type="PANTHER" id="PTHR33991">
    <property type="entry name" value="DNA REPAIR PROTEIN RECO"/>
    <property type="match status" value="1"/>
</dbReference>
<dbReference type="PANTHER" id="PTHR33991:SF1">
    <property type="entry name" value="DNA REPAIR PROTEIN RECO"/>
    <property type="match status" value="1"/>
</dbReference>
<dbReference type="Pfam" id="PF02565">
    <property type="entry name" value="RecO_C"/>
    <property type="match status" value="1"/>
</dbReference>
<dbReference type="Pfam" id="PF11967">
    <property type="entry name" value="RecO_N"/>
    <property type="match status" value="1"/>
</dbReference>
<dbReference type="SUPFAM" id="SSF57863">
    <property type="entry name" value="ArfGap/RecO-like zinc finger"/>
    <property type="match status" value="1"/>
</dbReference>
<dbReference type="SUPFAM" id="SSF50249">
    <property type="entry name" value="Nucleic acid-binding proteins"/>
    <property type="match status" value="1"/>
</dbReference>
<keyword id="KW-0227">DNA damage</keyword>
<keyword id="KW-0233">DNA recombination</keyword>
<keyword id="KW-0234">DNA repair</keyword>
<sequence length="240" mass="26940">MLIEHERGFVLHVRAWRETSLLVEVLTEQHGRVGLLARGVHGPRKQALRAALQPLQLIQFSAVQRGELAQLRQAEALDTAPRLVGDTMLAGFYISELLLRLAPRNDPVPELYACYTQARTHLAADLPLAWGLRRFERDVLEGLGFAFDLQHDSDGQPIDPAARYRLDPEEGALRVLSERLAQDRRETVTGAALLALGEDVMPAAEDMPGLRRSMRSVLLHHLGGRGLKSWEMLEDLARRR</sequence>
<accession>Q2P4L9</accession>
<feature type="chain" id="PRO_0000264856" description="DNA repair protein RecO">
    <location>
        <begin position="1"/>
        <end position="240"/>
    </location>
</feature>